<reference key="1">
    <citation type="journal article" date="1991" name="FEBS Lett.">
        <title>Amino acid sequences of nerve growth factors derived from cobra venoms.</title>
        <authorList>
            <person name="Inoue S."/>
            <person name="Oda T."/>
            <person name="Koyama J."/>
            <person name="Ikeda K."/>
            <person name="Hayashi K."/>
        </authorList>
    </citation>
    <scope>PROTEIN SEQUENCE</scope>
    <source>
        <tissue>Venom</tissue>
    </source>
</reference>
<reference key="2">
    <citation type="journal article" date="2010" name="J. Biol. Chem.">
        <title>Nerve growth factor inhibits metalloproteinase-disintegrins and blocks ectodomain shedding of platelet glycoprotein VI.</title>
        <authorList>
            <person name="Wijeyewickrema L.C."/>
            <person name="Gardiner E.E."/>
            <person name="Gladigau E.L."/>
            <person name="Berndt M.C."/>
            <person name="Andrews R.K."/>
        </authorList>
    </citation>
    <scope>PROTEIN SEQUENCE OF 1-14</scope>
    <scope>FUNCTION AS METALLOPROTEINASE INHIBITOR</scope>
    <scope>MASS SPECTROMETRY</scope>
    <source>
        <tissue>Venom</tissue>
    </source>
</reference>
<reference key="3">
    <citation type="journal article" date="2002" name="Biochem. Biophys. Res. Commun.">
        <title>Crystallization and preliminary X-ray diffraction studies of cobra venom beta-nerve growth factor.</title>
        <authorList>
            <person name="Gu L."/>
            <person name="Shen Y."/>
            <person name="Xu S."/>
            <person name="Shu Y."/>
            <person name="Jiang T."/>
            <person name="Lin Z."/>
        </authorList>
    </citation>
    <scope>CRYSTALLIZATION</scope>
    <scope>SUBCELLULAR LOCATION</scope>
    <scope>TISSUE SPECIFICITY</scope>
    <source>
        <tissue>Venom</tissue>
    </source>
</reference>
<name>NGFV_NAJKA</name>
<accession>P61899</accession>
<accession>P21377</accession>
<dbReference type="SMR" id="P61899"/>
<dbReference type="GO" id="GO:0030424">
    <property type="term" value="C:axon"/>
    <property type="evidence" value="ECO:0007669"/>
    <property type="project" value="TreeGrafter"/>
</dbReference>
<dbReference type="GO" id="GO:0030425">
    <property type="term" value="C:dendrite"/>
    <property type="evidence" value="ECO:0007669"/>
    <property type="project" value="TreeGrafter"/>
</dbReference>
<dbReference type="GO" id="GO:0005615">
    <property type="term" value="C:extracellular space"/>
    <property type="evidence" value="ECO:0007669"/>
    <property type="project" value="TreeGrafter"/>
</dbReference>
<dbReference type="GO" id="GO:0008021">
    <property type="term" value="C:synaptic vesicle"/>
    <property type="evidence" value="ECO:0007669"/>
    <property type="project" value="TreeGrafter"/>
</dbReference>
<dbReference type="GO" id="GO:0008083">
    <property type="term" value="F:growth factor activity"/>
    <property type="evidence" value="ECO:0007669"/>
    <property type="project" value="UniProtKB-KW"/>
</dbReference>
<dbReference type="GO" id="GO:0008289">
    <property type="term" value="F:lipid binding"/>
    <property type="evidence" value="ECO:0007669"/>
    <property type="project" value="UniProtKB-KW"/>
</dbReference>
<dbReference type="GO" id="GO:0008191">
    <property type="term" value="F:metalloendopeptidase inhibitor activity"/>
    <property type="evidence" value="ECO:0000314"/>
    <property type="project" value="UniProtKB"/>
</dbReference>
<dbReference type="GO" id="GO:0005163">
    <property type="term" value="F:nerve growth factor receptor binding"/>
    <property type="evidence" value="ECO:0007669"/>
    <property type="project" value="TreeGrafter"/>
</dbReference>
<dbReference type="GO" id="GO:0090729">
    <property type="term" value="F:toxin activity"/>
    <property type="evidence" value="ECO:0007669"/>
    <property type="project" value="UniProtKB-KW"/>
</dbReference>
<dbReference type="GO" id="GO:0007169">
    <property type="term" value="P:cell surface receptor protein tyrosine kinase signaling pathway"/>
    <property type="evidence" value="ECO:0007669"/>
    <property type="project" value="TreeGrafter"/>
</dbReference>
<dbReference type="GO" id="GO:0050804">
    <property type="term" value="P:modulation of chemical synaptic transmission"/>
    <property type="evidence" value="ECO:0007669"/>
    <property type="project" value="TreeGrafter"/>
</dbReference>
<dbReference type="GO" id="GO:0043524">
    <property type="term" value="P:negative regulation of neuron apoptotic process"/>
    <property type="evidence" value="ECO:0007669"/>
    <property type="project" value="TreeGrafter"/>
</dbReference>
<dbReference type="GO" id="GO:0021675">
    <property type="term" value="P:nerve development"/>
    <property type="evidence" value="ECO:0007669"/>
    <property type="project" value="TreeGrafter"/>
</dbReference>
<dbReference type="GO" id="GO:0038180">
    <property type="term" value="P:nerve growth factor signaling pathway"/>
    <property type="evidence" value="ECO:0007669"/>
    <property type="project" value="TreeGrafter"/>
</dbReference>
<dbReference type="GO" id="GO:0048812">
    <property type="term" value="P:neuron projection morphogenesis"/>
    <property type="evidence" value="ECO:0007669"/>
    <property type="project" value="TreeGrafter"/>
</dbReference>
<dbReference type="FunFam" id="2.10.90.10:FF:000002">
    <property type="entry name" value="Brain-derived neurotrophic factor"/>
    <property type="match status" value="1"/>
</dbReference>
<dbReference type="Gene3D" id="2.10.90.10">
    <property type="entry name" value="Cystine-knot cytokines"/>
    <property type="match status" value="1"/>
</dbReference>
<dbReference type="InterPro" id="IPR029034">
    <property type="entry name" value="Cystine-knot_cytokine"/>
</dbReference>
<dbReference type="InterPro" id="IPR020408">
    <property type="entry name" value="Nerve_growth_factor-like"/>
</dbReference>
<dbReference type="InterPro" id="IPR002072">
    <property type="entry name" value="Nerve_growth_factor-rel"/>
</dbReference>
<dbReference type="InterPro" id="IPR020425">
    <property type="entry name" value="Nerve_growth_factor_bsu"/>
</dbReference>
<dbReference type="InterPro" id="IPR019846">
    <property type="entry name" value="Nerve_growth_factor_CS"/>
</dbReference>
<dbReference type="PANTHER" id="PTHR11589:SF10">
    <property type="entry name" value="BETA-NERVE GROWTH FACTOR"/>
    <property type="match status" value="1"/>
</dbReference>
<dbReference type="PANTHER" id="PTHR11589">
    <property type="entry name" value="NERVE GROWTH FACTOR NGF -RELATED"/>
    <property type="match status" value="1"/>
</dbReference>
<dbReference type="Pfam" id="PF00243">
    <property type="entry name" value="NGF"/>
    <property type="match status" value="1"/>
</dbReference>
<dbReference type="PRINTS" id="PR00268">
    <property type="entry name" value="NGF"/>
</dbReference>
<dbReference type="PRINTS" id="PR01913">
    <property type="entry name" value="NGFBETA"/>
</dbReference>
<dbReference type="SMART" id="SM00140">
    <property type="entry name" value="NGF"/>
    <property type="match status" value="1"/>
</dbReference>
<dbReference type="SUPFAM" id="SSF57501">
    <property type="entry name" value="Cystine-knot cytokines"/>
    <property type="match status" value="1"/>
</dbReference>
<dbReference type="PROSITE" id="PS00248">
    <property type="entry name" value="NGF_1"/>
    <property type="match status" value="1"/>
</dbReference>
<dbReference type="PROSITE" id="PS50270">
    <property type="entry name" value="NGF_2"/>
    <property type="match status" value="1"/>
</dbReference>
<sequence>EDHPVHNLGEHSVCDSVSAWVTKTTATDIKGNTVTVMENVNLDNKVYKEYFFETKCKNPNPEPSGCRGIDSSHWNSYCTETDTFIKALTMEGNQASWRFIRIETACVCVITKKKGN</sequence>
<comment type="function">
    <text evidence="2 4">Nerve growth factor is important for the development and maintenance of the sympathetic and sensory nervous systems. It stimulates division and differentiation of sympathetic and embryonic sensory neurons as well as basal forebrain cholinergic neurons in the brain. Its relevance in the snake venom is not clear. However, it has been shown to inhibit metalloproteinase-dependent proteolysis of platelet glycoprotein Ib alpha, suggesting a metalloproteinase inhibition to prevent metalloprotease autodigestion and/or protection against prey proteases (PubMed:20164177). Binds a lipid between the two protein chains in the homodimer. The lipid-bound form promotes histamine relase from mouse mast cells, contrary to the lipid-free form (By similarity).</text>
</comment>
<comment type="subunit">
    <text evidence="1">Homodimer; non-covalently linked.</text>
</comment>
<comment type="subcellular location">
    <subcellularLocation>
        <location evidence="3">Secreted</location>
    </subcellularLocation>
</comment>
<comment type="tissue specificity">
    <text evidence="6">Expressed by the venom gland.</text>
</comment>
<comment type="mass spectrometry"/>
<comment type="similarity">
    <text evidence="5">Belongs to the NGF-beta family.</text>
</comment>
<keyword id="KW-0903">Direct protein sequencing</keyword>
<keyword id="KW-1015">Disulfide bond</keyword>
<keyword id="KW-0339">Growth factor</keyword>
<keyword id="KW-0446">Lipid-binding</keyword>
<keyword id="KW-0481">Metalloenzyme inhibitor</keyword>
<keyword id="KW-0483">Metalloprotease inhibitor</keyword>
<keyword id="KW-0646">Protease inhibitor</keyword>
<keyword id="KW-0964">Secreted</keyword>
<keyword id="KW-0800">Toxin</keyword>
<proteinExistence type="evidence at protein level"/>
<protein>
    <recommendedName>
        <fullName>Venom nerve growth factor</fullName>
        <shortName>v-NGF</shortName>
        <shortName>vNGF</shortName>
    </recommendedName>
</protein>
<organism>
    <name type="scientific">Naja kaouthia</name>
    <name type="common">Monocled cobra</name>
    <name type="synonym">Naja siamensis</name>
    <dbReference type="NCBI Taxonomy" id="8649"/>
    <lineage>
        <taxon>Eukaryota</taxon>
        <taxon>Metazoa</taxon>
        <taxon>Chordata</taxon>
        <taxon>Craniata</taxon>
        <taxon>Vertebrata</taxon>
        <taxon>Euteleostomi</taxon>
        <taxon>Lepidosauria</taxon>
        <taxon>Squamata</taxon>
        <taxon>Bifurcata</taxon>
        <taxon>Unidentata</taxon>
        <taxon>Episquamata</taxon>
        <taxon>Toxicofera</taxon>
        <taxon>Serpentes</taxon>
        <taxon>Colubroidea</taxon>
        <taxon>Elapidae</taxon>
        <taxon>Elapinae</taxon>
        <taxon>Naja</taxon>
    </lineage>
</organism>
<feature type="chain" id="PRO_0000159606" description="Venom nerve growth factor">
    <location>
        <begin position="1"/>
        <end position="116"/>
    </location>
</feature>
<feature type="disulfide bond" evidence="2">
    <location>
        <begin position="14"/>
        <end position="78"/>
    </location>
</feature>
<feature type="disulfide bond" evidence="2">
    <location>
        <begin position="56"/>
        <end position="106"/>
    </location>
</feature>
<feature type="disulfide bond" evidence="2">
    <location>
        <begin position="66"/>
        <end position="108"/>
    </location>
</feature>
<evidence type="ECO:0000250" key="1"/>
<evidence type="ECO:0000250" key="2">
    <source>
        <dbReference type="UniProtKB" id="P61898"/>
    </source>
</evidence>
<evidence type="ECO:0000269" key="3">
    <source>
    </source>
</evidence>
<evidence type="ECO:0000269" key="4">
    <source>
    </source>
</evidence>
<evidence type="ECO:0000305" key="5"/>
<evidence type="ECO:0000305" key="6">
    <source>
    </source>
</evidence>